<accession>Q51805</accession>
<reference key="1">
    <citation type="journal article" date="1996" name="J. Bacteriol.">
        <title>Molecular and phylogenetic characterization of pyruvate and 2-ketoisovalerate ferredoxin oxidoreductases from Pyrococcus furiosus and pyruvate ferredoxin oxidoreductase from Thermotoga maritima.</title>
        <authorList>
            <person name="Kletzin A."/>
            <person name="Adams M.W.W."/>
        </authorList>
    </citation>
    <scope>NUCLEOTIDE SEQUENCE [GENOMIC DNA]</scope>
    <scope>PROTEIN SEQUENCE OF 2-24</scope>
    <source>
        <strain>ATCC 43587 / DSM 3638 / JCM 8422 / Vc1</strain>
    </source>
</reference>
<reference key="2">
    <citation type="journal article" date="1999" name="Genetics">
        <title>Divergence of the hyperthermophilic archaea Pyrococcus furiosus and P. horikoshii inferred from complete genomic sequences.</title>
        <authorList>
            <person name="Maeder D.L."/>
            <person name="Weiss R.B."/>
            <person name="Dunn D.M."/>
            <person name="Cherry J.L."/>
            <person name="Gonzalez J.M."/>
            <person name="DiRuggiero J."/>
            <person name="Robb F.T."/>
        </authorList>
    </citation>
    <scope>NUCLEOTIDE SEQUENCE [LARGE SCALE GENOMIC DNA]</scope>
    <source>
        <strain>ATCC 43587 / DSM 3638 / JCM 8422 / Vc1</strain>
    </source>
</reference>
<reference key="3">
    <citation type="journal article" date="1993" name="Biochim. Biophys. Acta">
        <title>Purification and characterization of pyruvate ferredoxin oxidoreductase from the hyperthermophilic archaeon Pyrococcus furiosus.</title>
        <authorList>
            <person name="Blamey J.M."/>
            <person name="Adams M.W.W."/>
        </authorList>
    </citation>
    <scope>CHARACTERIZATION</scope>
    <source>
        <strain>ATCC 43587 / DSM 3638 / JCM 8422 / Vc1</strain>
    </source>
</reference>
<feature type="initiator methionine" description="Removed" evidence="2">
    <location>
        <position position="1"/>
    </location>
</feature>
<feature type="chain" id="PRO_0000099907" description="Pyruvate synthase subunit PorB">
    <location>
        <begin position="2"/>
        <end position="331"/>
    </location>
</feature>
<feature type="binding site" evidence="1">
    <location>
        <position position="21"/>
    </location>
    <ligand>
        <name>[4Fe-4S] cluster</name>
        <dbReference type="ChEBI" id="CHEBI:49883"/>
    </ligand>
</feature>
<feature type="binding site" evidence="1">
    <location>
        <position position="24"/>
    </location>
    <ligand>
        <name>[4Fe-4S] cluster</name>
        <dbReference type="ChEBI" id="CHEBI:49883"/>
    </ligand>
</feature>
<feature type="binding site" evidence="1">
    <location>
        <position position="59"/>
    </location>
    <ligand>
        <name>[4Fe-4S] cluster</name>
        <dbReference type="ChEBI" id="CHEBI:49883"/>
    </ligand>
</feature>
<feature type="binding site" evidence="1">
    <location>
        <position position="222"/>
    </location>
    <ligand>
        <name>[4Fe-4S] cluster</name>
        <dbReference type="ChEBI" id="CHEBI:49883"/>
    </ligand>
</feature>
<protein>
    <recommendedName>
        <fullName>Pyruvate synthase subunit PorB</fullName>
        <ecNumber>1.2.7.1</ecNumber>
    </recommendedName>
    <alternativeName>
        <fullName>Pyruvate oxidoreductase beta chain</fullName>
        <shortName>POR</shortName>
    </alternativeName>
    <alternativeName>
        <fullName>Pyruvic-ferredoxin oxidoreductase subunit beta</fullName>
    </alternativeName>
</protein>
<sequence length="331" mass="36261">MAVRKPPITTREYWAPGHAACAGCGCATALRLATKALSEAMEEKYGDPNAFAIAHATGCMEVVSAVFPYTAWKAPWIHVAFENAAAVASGIEAAWKKLGRKGKILAIGGDGGTADIGLQALSGMLERWHNVLYLMYDNEAYMNTGIQRSSSTPYGAWTTTSPPGKYSVGEDKPKKWVALIAAAHQIPYVATASIGNPLDFVRKIKKAGKIDGPAFVQVLCTCPTGWRSPLEKGVEIARLAIETGIWPLFEIENGDIWNIKIQPPGGGAKVYKEGNRVVRIEFKKPIEEYLKLQGRFKHLFKRPEAIEELRNQVKAMWKVLGVEAILPRPEE</sequence>
<name>PORB_PYRFU</name>
<keyword id="KW-0004">4Fe-4S</keyword>
<keyword id="KW-0903">Direct protein sequencing</keyword>
<keyword id="KW-0408">Iron</keyword>
<keyword id="KW-0411">Iron-sulfur</keyword>
<keyword id="KW-0479">Metal-binding</keyword>
<keyword id="KW-0560">Oxidoreductase</keyword>
<keyword id="KW-1185">Reference proteome</keyword>
<comment type="catalytic activity">
    <reaction>
        <text>2 oxidized [2Fe-2S]-[ferredoxin] + pyruvate + CoA = 2 reduced [2Fe-2S]-[ferredoxin] + acetyl-CoA + CO2 + H(+)</text>
        <dbReference type="Rhea" id="RHEA:12765"/>
        <dbReference type="Rhea" id="RHEA-COMP:10000"/>
        <dbReference type="Rhea" id="RHEA-COMP:10001"/>
        <dbReference type="ChEBI" id="CHEBI:15361"/>
        <dbReference type="ChEBI" id="CHEBI:15378"/>
        <dbReference type="ChEBI" id="CHEBI:16526"/>
        <dbReference type="ChEBI" id="CHEBI:33737"/>
        <dbReference type="ChEBI" id="CHEBI:33738"/>
        <dbReference type="ChEBI" id="CHEBI:57287"/>
        <dbReference type="ChEBI" id="CHEBI:57288"/>
        <dbReference type="EC" id="1.2.7.1"/>
    </reaction>
</comment>
<comment type="cofactor">
    <cofactor evidence="1">
        <name>[4Fe-4S] cluster</name>
        <dbReference type="ChEBI" id="CHEBI:49883"/>
    </cofactor>
    <text evidence="1">Binds 1 [4Fe-4S] cluster per subunit.</text>
</comment>
<comment type="subunit">
    <text>Heterotetramer of one alpha, one beta, one delta and one gamma chain.</text>
</comment>
<dbReference type="EC" id="1.2.7.1"/>
<dbReference type="EMBL" id="X85250">
    <property type="protein sequence ID" value="CAA59506.1"/>
    <property type="molecule type" value="Genomic_DNA"/>
</dbReference>
<dbReference type="EMBL" id="AE009950">
    <property type="protein sequence ID" value="AAL81089.1"/>
    <property type="molecule type" value="Genomic_DNA"/>
</dbReference>
<dbReference type="PIR" id="T45089">
    <property type="entry name" value="T45089"/>
</dbReference>
<dbReference type="RefSeq" id="WP_011012102.1">
    <property type="nucleotide sequence ID" value="NZ_CP023154.1"/>
</dbReference>
<dbReference type="SMR" id="Q51805"/>
<dbReference type="STRING" id="186497.PF0965"/>
<dbReference type="PaxDb" id="186497-PF0965"/>
<dbReference type="GeneID" id="41712777"/>
<dbReference type="KEGG" id="pfu:PF0965"/>
<dbReference type="PATRIC" id="fig|186497.12.peg.1024"/>
<dbReference type="eggNOG" id="arCOG01601">
    <property type="taxonomic scope" value="Archaea"/>
</dbReference>
<dbReference type="HOGENOM" id="CLU_058423_0_0_2"/>
<dbReference type="OrthoDB" id="296931at2157"/>
<dbReference type="PhylomeDB" id="Q51805"/>
<dbReference type="BRENDA" id="1.2.7.1">
    <property type="organism ID" value="5243"/>
</dbReference>
<dbReference type="Proteomes" id="UP000001013">
    <property type="component" value="Chromosome"/>
</dbReference>
<dbReference type="GO" id="GO:0051539">
    <property type="term" value="F:4 iron, 4 sulfur cluster binding"/>
    <property type="evidence" value="ECO:0007669"/>
    <property type="project" value="UniProtKB-KW"/>
</dbReference>
<dbReference type="GO" id="GO:0046872">
    <property type="term" value="F:metal ion binding"/>
    <property type="evidence" value="ECO:0007669"/>
    <property type="project" value="UniProtKB-KW"/>
</dbReference>
<dbReference type="GO" id="GO:0019164">
    <property type="term" value="F:pyruvate synthase activity"/>
    <property type="evidence" value="ECO:0007669"/>
    <property type="project" value="UniProtKB-EC"/>
</dbReference>
<dbReference type="GO" id="GO:0030976">
    <property type="term" value="F:thiamine pyrophosphate binding"/>
    <property type="evidence" value="ECO:0007669"/>
    <property type="project" value="InterPro"/>
</dbReference>
<dbReference type="CDD" id="cd03376">
    <property type="entry name" value="TPP_PFOR_porB_like"/>
    <property type="match status" value="1"/>
</dbReference>
<dbReference type="Gene3D" id="3.40.50.970">
    <property type="match status" value="2"/>
</dbReference>
<dbReference type="InterPro" id="IPR051479">
    <property type="entry name" value="PorB-like"/>
</dbReference>
<dbReference type="InterPro" id="IPR029061">
    <property type="entry name" value="THDP-binding"/>
</dbReference>
<dbReference type="InterPro" id="IPR011766">
    <property type="entry name" value="TPP_enzyme_TPP-bd"/>
</dbReference>
<dbReference type="NCBIfam" id="NF008819">
    <property type="entry name" value="PRK11865.1"/>
    <property type="match status" value="1"/>
</dbReference>
<dbReference type="PANTHER" id="PTHR42897">
    <property type="entry name" value="PYRUVATE SYNTHASE SUBUNIT PORB"/>
    <property type="match status" value="1"/>
</dbReference>
<dbReference type="PANTHER" id="PTHR42897:SF2">
    <property type="entry name" value="PYRUVATE SYNTHASE SUBUNIT PORB"/>
    <property type="match status" value="1"/>
</dbReference>
<dbReference type="Pfam" id="PF02775">
    <property type="entry name" value="TPP_enzyme_C"/>
    <property type="match status" value="1"/>
</dbReference>
<dbReference type="SUPFAM" id="SSF52518">
    <property type="entry name" value="Thiamin diphosphate-binding fold (THDP-binding)"/>
    <property type="match status" value="1"/>
</dbReference>
<gene>
    <name type="primary">porB</name>
    <name type="ordered locus">PF0965</name>
</gene>
<organism>
    <name type="scientific">Pyrococcus furiosus (strain ATCC 43587 / DSM 3638 / JCM 8422 / Vc1)</name>
    <dbReference type="NCBI Taxonomy" id="186497"/>
    <lineage>
        <taxon>Archaea</taxon>
        <taxon>Methanobacteriati</taxon>
        <taxon>Methanobacteriota</taxon>
        <taxon>Thermococci</taxon>
        <taxon>Thermococcales</taxon>
        <taxon>Thermococcaceae</taxon>
        <taxon>Pyrococcus</taxon>
    </lineage>
</organism>
<proteinExistence type="evidence at protein level"/>
<evidence type="ECO:0000250" key="1">
    <source>
        <dbReference type="UniProtKB" id="P94692"/>
    </source>
</evidence>
<evidence type="ECO:0000269" key="2">
    <source>
    </source>
</evidence>